<sequence>MVKVIASSVRKGNVLDVDGKLYVVLTAANFHPGKGTPVTQVDMRRIVDGVKVSERWRTTEQVERAFVEDVNFQYLYEDGEGFHFMNPVSYDQVVVDVETMGDQKAFLQEGMTCVLSMHEGIALALQLPRHVTLEIAETEPVVKGQTASSSYKPAILSNGVRTLVPPHINAGTRVVIATEDVSYVERAKD</sequence>
<keyword id="KW-0963">Cytoplasm</keyword>
<keyword id="KW-0251">Elongation factor</keyword>
<keyword id="KW-0648">Protein biosynthesis</keyword>
<evidence type="ECO:0000255" key="1">
    <source>
        <dbReference type="HAMAP-Rule" id="MF_00141"/>
    </source>
</evidence>
<name>EFP_RHIR8</name>
<dbReference type="EMBL" id="CP000628">
    <property type="protein sequence ID" value="ACM28310.1"/>
    <property type="molecule type" value="Genomic_DNA"/>
</dbReference>
<dbReference type="RefSeq" id="WP_012652845.1">
    <property type="nucleotide sequence ID" value="NC_011985.1"/>
</dbReference>
<dbReference type="SMR" id="B9JDI1"/>
<dbReference type="STRING" id="311403.Arad_4639"/>
<dbReference type="GeneID" id="86850181"/>
<dbReference type="KEGG" id="ara:Arad_4639"/>
<dbReference type="eggNOG" id="COG0231">
    <property type="taxonomic scope" value="Bacteria"/>
</dbReference>
<dbReference type="HOGENOM" id="CLU_074944_1_1_5"/>
<dbReference type="UniPathway" id="UPA00345"/>
<dbReference type="Proteomes" id="UP000001600">
    <property type="component" value="Chromosome 1"/>
</dbReference>
<dbReference type="GO" id="GO:0005737">
    <property type="term" value="C:cytoplasm"/>
    <property type="evidence" value="ECO:0007669"/>
    <property type="project" value="UniProtKB-SubCell"/>
</dbReference>
<dbReference type="GO" id="GO:0003746">
    <property type="term" value="F:translation elongation factor activity"/>
    <property type="evidence" value="ECO:0007669"/>
    <property type="project" value="UniProtKB-UniRule"/>
</dbReference>
<dbReference type="GO" id="GO:0043043">
    <property type="term" value="P:peptide biosynthetic process"/>
    <property type="evidence" value="ECO:0007669"/>
    <property type="project" value="InterPro"/>
</dbReference>
<dbReference type="CDD" id="cd04470">
    <property type="entry name" value="S1_EF-P_repeat_1"/>
    <property type="match status" value="1"/>
</dbReference>
<dbReference type="CDD" id="cd05794">
    <property type="entry name" value="S1_EF-P_repeat_2"/>
    <property type="match status" value="1"/>
</dbReference>
<dbReference type="FunFam" id="2.40.50.140:FF:000004">
    <property type="entry name" value="Elongation factor P"/>
    <property type="match status" value="1"/>
</dbReference>
<dbReference type="FunFam" id="2.40.50.140:FF:000009">
    <property type="entry name" value="Elongation factor P"/>
    <property type="match status" value="1"/>
</dbReference>
<dbReference type="Gene3D" id="2.30.30.30">
    <property type="match status" value="1"/>
</dbReference>
<dbReference type="Gene3D" id="2.40.50.140">
    <property type="entry name" value="Nucleic acid-binding proteins"/>
    <property type="match status" value="2"/>
</dbReference>
<dbReference type="HAMAP" id="MF_00141">
    <property type="entry name" value="EF_P"/>
    <property type="match status" value="1"/>
</dbReference>
<dbReference type="InterPro" id="IPR015365">
    <property type="entry name" value="Elong-fact-P_C"/>
</dbReference>
<dbReference type="InterPro" id="IPR012340">
    <property type="entry name" value="NA-bd_OB-fold"/>
</dbReference>
<dbReference type="InterPro" id="IPR014722">
    <property type="entry name" value="Rib_uL2_dom2"/>
</dbReference>
<dbReference type="InterPro" id="IPR020599">
    <property type="entry name" value="Transl_elong_fac_P/YeiP"/>
</dbReference>
<dbReference type="InterPro" id="IPR013185">
    <property type="entry name" value="Transl_elong_KOW-like"/>
</dbReference>
<dbReference type="InterPro" id="IPR001059">
    <property type="entry name" value="Transl_elong_P/YeiP_cen"/>
</dbReference>
<dbReference type="InterPro" id="IPR013852">
    <property type="entry name" value="Transl_elong_P/YeiP_CS"/>
</dbReference>
<dbReference type="InterPro" id="IPR011768">
    <property type="entry name" value="Transl_elongation_fac_P"/>
</dbReference>
<dbReference type="InterPro" id="IPR008991">
    <property type="entry name" value="Translation_prot_SH3-like_sf"/>
</dbReference>
<dbReference type="NCBIfam" id="TIGR00038">
    <property type="entry name" value="efp"/>
    <property type="match status" value="1"/>
</dbReference>
<dbReference type="NCBIfam" id="NF001810">
    <property type="entry name" value="PRK00529.1"/>
    <property type="match status" value="1"/>
</dbReference>
<dbReference type="PANTHER" id="PTHR30053">
    <property type="entry name" value="ELONGATION FACTOR P"/>
    <property type="match status" value="1"/>
</dbReference>
<dbReference type="PANTHER" id="PTHR30053:SF14">
    <property type="entry name" value="TRANSLATION ELONGATION FACTOR KOW-LIKE DOMAIN-CONTAINING PROTEIN"/>
    <property type="match status" value="1"/>
</dbReference>
<dbReference type="Pfam" id="PF01132">
    <property type="entry name" value="EFP"/>
    <property type="match status" value="1"/>
</dbReference>
<dbReference type="Pfam" id="PF08207">
    <property type="entry name" value="EFP_N"/>
    <property type="match status" value="1"/>
</dbReference>
<dbReference type="Pfam" id="PF09285">
    <property type="entry name" value="Elong-fact-P_C"/>
    <property type="match status" value="1"/>
</dbReference>
<dbReference type="PIRSF" id="PIRSF005901">
    <property type="entry name" value="EF-P"/>
    <property type="match status" value="1"/>
</dbReference>
<dbReference type="SMART" id="SM01185">
    <property type="entry name" value="EFP"/>
    <property type="match status" value="1"/>
</dbReference>
<dbReference type="SMART" id="SM00841">
    <property type="entry name" value="Elong-fact-P_C"/>
    <property type="match status" value="1"/>
</dbReference>
<dbReference type="SUPFAM" id="SSF50249">
    <property type="entry name" value="Nucleic acid-binding proteins"/>
    <property type="match status" value="2"/>
</dbReference>
<dbReference type="SUPFAM" id="SSF50104">
    <property type="entry name" value="Translation proteins SH3-like domain"/>
    <property type="match status" value="1"/>
</dbReference>
<dbReference type="PROSITE" id="PS01275">
    <property type="entry name" value="EFP"/>
    <property type="match status" value="1"/>
</dbReference>
<accession>B9JDI1</accession>
<protein>
    <recommendedName>
        <fullName evidence="1">Elongation factor P</fullName>
        <shortName evidence="1">EF-P</shortName>
    </recommendedName>
</protein>
<reference key="1">
    <citation type="journal article" date="2009" name="J. Bacteriol.">
        <title>Genome sequences of three Agrobacterium biovars help elucidate the evolution of multichromosome genomes in bacteria.</title>
        <authorList>
            <person name="Slater S.C."/>
            <person name="Goldman B.S."/>
            <person name="Goodner B."/>
            <person name="Setubal J.C."/>
            <person name="Farrand S.K."/>
            <person name="Nester E.W."/>
            <person name="Burr T.J."/>
            <person name="Banta L."/>
            <person name="Dickerman A.W."/>
            <person name="Paulsen I."/>
            <person name="Otten L."/>
            <person name="Suen G."/>
            <person name="Welch R."/>
            <person name="Almeida N.F."/>
            <person name="Arnold F."/>
            <person name="Burton O.T."/>
            <person name="Du Z."/>
            <person name="Ewing A."/>
            <person name="Godsy E."/>
            <person name="Heisel S."/>
            <person name="Houmiel K.L."/>
            <person name="Jhaveri J."/>
            <person name="Lu J."/>
            <person name="Miller N.M."/>
            <person name="Norton S."/>
            <person name="Chen Q."/>
            <person name="Phoolcharoen W."/>
            <person name="Ohlin V."/>
            <person name="Ondrusek D."/>
            <person name="Pride N."/>
            <person name="Stricklin S.L."/>
            <person name="Sun J."/>
            <person name="Wheeler C."/>
            <person name="Wilson L."/>
            <person name="Zhu H."/>
            <person name="Wood D.W."/>
        </authorList>
    </citation>
    <scope>NUCLEOTIDE SEQUENCE [LARGE SCALE GENOMIC DNA]</scope>
    <source>
        <strain>K84 / ATCC BAA-868</strain>
    </source>
</reference>
<comment type="function">
    <text evidence="1">Involved in peptide bond synthesis. Stimulates efficient translation and peptide-bond synthesis on native or reconstituted 70S ribosomes in vitro. Probably functions indirectly by altering the affinity of the ribosome for aminoacyl-tRNA, thus increasing their reactivity as acceptors for peptidyl transferase.</text>
</comment>
<comment type="pathway">
    <text evidence="1">Protein biosynthesis; polypeptide chain elongation.</text>
</comment>
<comment type="subcellular location">
    <subcellularLocation>
        <location evidence="1">Cytoplasm</location>
    </subcellularLocation>
</comment>
<comment type="similarity">
    <text evidence="1">Belongs to the elongation factor P family.</text>
</comment>
<gene>
    <name evidence="1" type="primary">efp</name>
    <name type="ordered locus">Arad_4639</name>
</gene>
<feature type="chain" id="PRO_1000122982" description="Elongation factor P">
    <location>
        <begin position="1"/>
        <end position="189"/>
    </location>
</feature>
<organism>
    <name type="scientific">Rhizobium rhizogenes (strain K84 / ATCC BAA-868)</name>
    <name type="common">Agrobacterium radiobacter</name>
    <dbReference type="NCBI Taxonomy" id="311403"/>
    <lineage>
        <taxon>Bacteria</taxon>
        <taxon>Pseudomonadati</taxon>
        <taxon>Pseudomonadota</taxon>
        <taxon>Alphaproteobacteria</taxon>
        <taxon>Hyphomicrobiales</taxon>
        <taxon>Rhizobiaceae</taxon>
        <taxon>Rhizobium/Agrobacterium group</taxon>
        <taxon>Rhizobium</taxon>
    </lineage>
</organism>
<proteinExistence type="inferred from homology"/>